<keyword id="KW-1185">Reference proteome</keyword>
<keyword id="KW-0687">Ribonucleoprotein</keyword>
<keyword id="KW-0689">Ribosomal protein</keyword>
<keyword id="KW-0694">RNA-binding</keyword>
<keyword id="KW-0699">rRNA-binding</keyword>
<sequence>MTKTTKSANTKTPDEVKTDGLKEKMVSVNRVTKVVKGGRILGFAALTVVGDGKGSVGMGKGKSREVPLAVQKAMDEARQRMVRVNLINGTLHHSVIGRHGAARVYMQPASEGTGIIAGGPMRAIFEVMGVHNILAKCLGSTNPYNIVRATLDGLSKVQTPAMIAAKRGKSIDEITGA</sequence>
<proteinExistence type="inferred from homology"/>
<accession>Q82X75</accession>
<evidence type="ECO:0000255" key="1">
    <source>
        <dbReference type="HAMAP-Rule" id="MF_01307"/>
    </source>
</evidence>
<evidence type="ECO:0000305" key="2"/>
<dbReference type="EMBL" id="AL954747">
    <property type="protein sequence ID" value="CAD84329.1"/>
    <property type="molecule type" value="Genomic_DNA"/>
</dbReference>
<dbReference type="SMR" id="Q82X75"/>
<dbReference type="STRING" id="228410.NE0418"/>
<dbReference type="KEGG" id="neu:NE0418"/>
<dbReference type="eggNOG" id="COG0098">
    <property type="taxonomic scope" value="Bacteria"/>
</dbReference>
<dbReference type="HOGENOM" id="CLU_065898_2_2_4"/>
<dbReference type="PhylomeDB" id="Q82X75"/>
<dbReference type="Proteomes" id="UP000001416">
    <property type="component" value="Chromosome"/>
</dbReference>
<dbReference type="GO" id="GO:0015935">
    <property type="term" value="C:small ribosomal subunit"/>
    <property type="evidence" value="ECO:0007669"/>
    <property type="project" value="InterPro"/>
</dbReference>
<dbReference type="GO" id="GO:0019843">
    <property type="term" value="F:rRNA binding"/>
    <property type="evidence" value="ECO:0007669"/>
    <property type="project" value="UniProtKB-UniRule"/>
</dbReference>
<dbReference type="GO" id="GO:0003735">
    <property type="term" value="F:structural constituent of ribosome"/>
    <property type="evidence" value="ECO:0007669"/>
    <property type="project" value="InterPro"/>
</dbReference>
<dbReference type="GO" id="GO:0006412">
    <property type="term" value="P:translation"/>
    <property type="evidence" value="ECO:0007669"/>
    <property type="project" value="UniProtKB-UniRule"/>
</dbReference>
<dbReference type="FunFam" id="3.30.160.20:FF:000001">
    <property type="entry name" value="30S ribosomal protein S5"/>
    <property type="match status" value="1"/>
</dbReference>
<dbReference type="FunFam" id="3.30.230.10:FF:000002">
    <property type="entry name" value="30S ribosomal protein S5"/>
    <property type="match status" value="1"/>
</dbReference>
<dbReference type="Gene3D" id="3.30.160.20">
    <property type="match status" value="1"/>
</dbReference>
<dbReference type="Gene3D" id="3.30.230.10">
    <property type="match status" value="1"/>
</dbReference>
<dbReference type="HAMAP" id="MF_01307_B">
    <property type="entry name" value="Ribosomal_uS5_B"/>
    <property type="match status" value="1"/>
</dbReference>
<dbReference type="InterPro" id="IPR020568">
    <property type="entry name" value="Ribosomal_Su5_D2-typ_SF"/>
</dbReference>
<dbReference type="InterPro" id="IPR000851">
    <property type="entry name" value="Ribosomal_uS5"/>
</dbReference>
<dbReference type="InterPro" id="IPR005712">
    <property type="entry name" value="Ribosomal_uS5_bac-type"/>
</dbReference>
<dbReference type="InterPro" id="IPR005324">
    <property type="entry name" value="Ribosomal_uS5_C"/>
</dbReference>
<dbReference type="InterPro" id="IPR013810">
    <property type="entry name" value="Ribosomal_uS5_N"/>
</dbReference>
<dbReference type="InterPro" id="IPR018192">
    <property type="entry name" value="Ribosomal_uS5_N_CS"/>
</dbReference>
<dbReference type="InterPro" id="IPR014721">
    <property type="entry name" value="Ribsml_uS5_D2-typ_fold_subgr"/>
</dbReference>
<dbReference type="NCBIfam" id="TIGR01021">
    <property type="entry name" value="rpsE_bact"/>
    <property type="match status" value="1"/>
</dbReference>
<dbReference type="PANTHER" id="PTHR48277">
    <property type="entry name" value="MITOCHONDRIAL RIBOSOMAL PROTEIN S5"/>
    <property type="match status" value="1"/>
</dbReference>
<dbReference type="PANTHER" id="PTHR48277:SF1">
    <property type="entry name" value="MITOCHONDRIAL RIBOSOMAL PROTEIN S5"/>
    <property type="match status" value="1"/>
</dbReference>
<dbReference type="Pfam" id="PF00333">
    <property type="entry name" value="Ribosomal_S5"/>
    <property type="match status" value="1"/>
</dbReference>
<dbReference type="Pfam" id="PF03719">
    <property type="entry name" value="Ribosomal_S5_C"/>
    <property type="match status" value="1"/>
</dbReference>
<dbReference type="SUPFAM" id="SSF54768">
    <property type="entry name" value="dsRNA-binding domain-like"/>
    <property type="match status" value="1"/>
</dbReference>
<dbReference type="SUPFAM" id="SSF54211">
    <property type="entry name" value="Ribosomal protein S5 domain 2-like"/>
    <property type="match status" value="1"/>
</dbReference>
<dbReference type="PROSITE" id="PS00585">
    <property type="entry name" value="RIBOSOMAL_S5"/>
    <property type="match status" value="1"/>
</dbReference>
<dbReference type="PROSITE" id="PS50881">
    <property type="entry name" value="S5_DSRBD"/>
    <property type="match status" value="1"/>
</dbReference>
<comment type="function">
    <text evidence="1">With S4 and S12 plays an important role in translational accuracy.</text>
</comment>
<comment type="function">
    <text evidence="1">Located at the back of the 30S subunit body where it stabilizes the conformation of the head with respect to the body.</text>
</comment>
<comment type="subunit">
    <text evidence="1">Part of the 30S ribosomal subunit. Contacts proteins S4 and S8.</text>
</comment>
<comment type="domain">
    <text>The N-terminal domain interacts with the head of the 30S subunit; the C-terminal domain interacts with the body and contacts protein S4. The interaction surface between S4 and S5 is involved in control of translational fidelity.</text>
</comment>
<comment type="similarity">
    <text evidence="1">Belongs to the universal ribosomal protein uS5 family.</text>
</comment>
<protein>
    <recommendedName>
        <fullName evidence="1">Small ribosomal subunit protein uS5</fullName>
    </recommendedName>
    <alternativeName>
        <fullName evidence="2">30S ribosomal protein S5</fullName>
    </alternativeName>
</protein>
<organism>
    <name type="scientific">Nitrosomonas europaea (strain ATCC 19718 / CIP 103999 / KCTC 2705 / NBRC 14298)</name>
    <dbReference type="NCBI Taxonomy" id="228410"/>
    <lineage>
        <taxon>Bacteria</taxon>
        <taxon>Pseudomonadati</taxon>
        <taxon>Pseudomonadota</taxon>
        <taxon>Betaproteobacteria</taxon>
        <taxon>Nitrosomonadales</taxon>
        <taxon>Nitrosomonadaceae</taxon>
        <taxon>Nitrosomonas</taxon>
    </lineage>
</organism>
<reference key="1">
    <citation type="journal article" date="2003" name="J. Bacteriol.">
        <title>Complete genome sequence of the ammonia-oxidizing bacterium and obligate chemolithoautotroph Nitrosomonas europaea.</title>
        <authorList>
            <person name="Chain P."/>
            <person name="Lamerdin J.E."/>
            <person name="Larimer F.W."/>
            <person name="Regala W."/>
            <person name="Lao V."/>
            <person name="Land M.L."/>
            <person name="Hauser L."/>
            <person name="Hooper A.B."/>
            <person name="Klotz M.G."/>
            <person name="Norton J."/>
            <person name="Sayavedra-Soto L.A."/>
            <person name="Arciero D.M."/>
            <person name="Hommes N.G."/>
            <person name="Whittaker M.M."/>
            <person name="Arp D.J."/>
        </authorList>
    </citation>
    <scope>NUCLEOTIDE SEQUENCE [LARGE SCALE GENOMIC DNA]</scope>
    <source>
        <strain>ATCC 19718 / CIP 103999 / KCTC 2705 / NBRC 14298</strain>
    </source>
</reference>
<feature type="chain" id="PRO_0000131561" description="Small ribosomal subunit protein uS5">
    <location>
        <begin position="1"/>
        <end position="177"/>
    </location>
</feature>
<feature type="domain" description="S5 DRBM" evidence="1">
    <location>
        <begin position="21"/>
        <end position="84"/>
    </location>
</feature>
<gene>
    <name evidence="1" type="primary">rpsE</name>
    <name type="ordered locus">NE0418</name>
</gene>
<name>RS5_NITEU</name>